<comment type="function">
    <text evidence="9 14">Repressor of jasmonate responses. Jasmonoyl-isoleucine (JA-Ile) specifically promotes COI1-TIFY7/JAZ9 interaction (PubMed:19151223). Interacts with and suppresses RHD6 and RSL1 transcription factor activities to negatively regulate jasmonate-stimulated root hair development (PubMed:31988260).</text>
</comment>
<comment type="subunit">
    <text evidence="8 9 10 11 12 13 14">Homo- and heterodimer. Interacts with MYC2, MYC3, MYC4, COI1, AFPH2/NINJA, TIFY10A/JAZ1, TIFY10B/JAZ2, TIFY6B/JAZ3, TIFY5A/JAZ8, TIFY9/JAZ10 and TIFY3A/JAZ11 (PubMed:18547396, PubMed:19151223, PubMed:19309455, PubMed:20360743, PubMed:21321051, PubMed:23169619). Interacts with RHD6 and RSL1 (PubMed:31988260).</text>
</comment>
<comment type="interaction">
    <interactant intactId="EBI-1792583">
        <id>Q8W4J8</id>
    </interactant>
    <interactant intactId="EBI-1787005">
        <id>Q9SV55</id>
        <label>AFPH2</label>
    </interactant>
    <organismsDiffer>false</organismsDiffer>
    <experiments>9</experiments>
</comment>
<comment type="interaction">
    <interactant intactId="EBI-1792583">
        <id>Q8W4J8</id>
    </interactant>
    <interactant intactId="EBI-25522986">
        <id>Q9FIW5</id>
        <label>ANAC094</label>
    </interactant>
    <organismsDiffer>false</organismsDiffer>
    <experiments>3</experiments>
</comment>
<comment type="interaction">
    <interactant intactId="EBI-1792583">
        <id>Q8W4J8</id>
    </interactant>
    <interactant intactId="EBI-4434261">
        <id>Q9LNJ5</id>
        <label>BHLH13</label>
    </interactant>
    <organismsDiffer>false</organismsDiffer>
    <experiments>5</experiments>
</comment>
<comment type="interaction">
    <interactant intactId="EBI-1792583">
        <id>Q8W4J8</id>
    </interactant>
    <interactant intactId="EBI-401159">
        <id>O04197</id>
        <label>COI1</label>
    </interactant>
    <organismsDiffer>false</organismsDiffer>
    <experiments>7</experiments>
</comment>
<comment type="interaction">
    <interactant intactId="EBI-1792583">
        <id>Q8W4J8</id>
    </interactant>
    <interactant intactId="EBI-963606">
        <id>Q9LQT8</id>
        <label>GAI</label>
    </interactant>
    <organismsDiffer>false</organismsDiffer>
    <experiments>10</experiments>
</comment>
<comment type="interaction">
    <interactant intactId="EBI-1792583">
        <id>Q8W4J8</id>
    </interactant>
    <interactant intactId="EBI-1792336">
        <id>Q39204</id>
        <label>MYC2</label>
    </interactant>
    <organismsDiffer>false</organismsDiffer>
    <experiments>19</experiments>
</comment>
<comment type="interaction">
    <interactant intactId="EBI-1792583">
        <id>Q8W4J8</id>
    </interactant>
    <interactant intactId="EBI-15845995">
        <id>Q9FIP9</id>
        <label>MYC3</label>
    </interactant>
    <organismsDiffer>false</organismsDiffer>
    <experiments>5</experiments>
</comment>
<comment type="interaction">
    <interactant intactId="EBI-1792583">
        <id>Q8W4J8</id>
    </interactant>
    <interactant intactId="EBI-15406909">
        <id>O49687</id>
        <label>MYC4</label>
    </interactant>
    <organismsDiffer>false</organismsDiffer>
    <experiments>8</experiments>
</comment>
<comment type="interaction">
    <interactant intactId="EBI-1792583">
        <id>Q8W4J8</id>
    </interactant>
    <interactant intactId="EBI-963624">
        <id>Q9SLH3</id>
        <label>RGA</label>
    </interactant>
    <organismsDiffer>false</organismsDiffer>
    <experiments>4</experiments>
</comment>
<comment type="interaction">
    <interactant intactId="EBI-1792583">
        <id>Q8W4J8</id>
    </interactant>
    <interactant intactId="EBI-963665">
        <id>Q8GXW1</id>
        <label>RGL2</label>
    </interactant>
    <organismsDiffer>false</organismsDiffer>
    <experiments>3</experiments>
</comment>
<comment type="interaction">
    <interactant intactId="EBI-1792583">
        <id>Q8W4J8</id>
    </interactant>
    <interactant intactId="EBI-15681313">
        <id>Q9LF53</id>
        <label>RGL3</label>
    </interactant>
    <organismsDiffer>false</organismsDiffer>
    <experiments>3</experiments>
</comment>
<comment type="interaction">
    <interactant intactId="EBI-1792583">
        <id>Q8W4J8</id>
    </interactant>
    <interactant intactId="EBI-4426144">
        <id>Q9C9L2</id>
        <label>TCP15</label>
    </interactant>
    <organismsDiffer>false</organismsDiffer>
    <experiments>3</experiments>
</comment>
<comment type="interaction">
    <interactant intactId="EBI-1792583">
        <id>Q8W4J8</id>
    </interactant>
    <interactant intactId="EBI-25522447">
        <id>Q9MAH8</id>
        <label>TCP3</label>
    </interactant>
    <organismsDiffer>false</organismsDiffer>
    <experiments>3</experiments>
</comment>
<comment type="interaction">
    <interactant intactId="EBI-1792583">
        <id>Q8W4J8</id>
    </interactant>
    <interactant intactId="EBI-1792431">
        <id>Q9LVI4</id>
        <label>TIFY6B</label>
    </interactant>
    <organismsDiffer>false</organismsDiffer>
    <experiments>4</experiments>
</comment>
<comment type="subcellular location">
    <subcellularLocation>
        <location evidence="4 13">Nucleus</location>
    </subcellularLocation>
</comment>
<comment type="alternative products">
    <event type="alternative splicing"/>
    <isoform>
        <id>Q8W4J8-1</id>
        <name>1</name>
        <sequence type="displayed"/>
    </isoform>
    <isoform>
        <id>Q8W4J8-2</id>
        <name>2</name>
        <sequence type="described" ref="VSP_027851"/>
    </isoform>
</comment>
<comment type="induction">
    <text evidence="5 7">Up-regulated by jasmonate, wounding and herbivory.</text>
</comment>
<comment type="domain">
    <text evidence="6 8">The jas domain (220-244) is necessary and sufficient for interaction with COI1.</text>
</comment>
<comment type="PTM">
    <text evidence="1">Ubiquitinated. Targeted for degradation by the SCF(COI1) E3 ubiquitin ligase-proteasome pathway during jasmonate signaling.</text>
</comment>
<comment type="similarity">
    <text evidence="15">Belongs to the TIFY/JAZ family.</text>
</comment>
<comment type="sequence caution" evidence="15">
    <conflict type="erroneous gene model prediction">
        <sequence resource="EMBL-CDS" id="AAG52332"/>
    </conflict>
</comment>
<comment type="sequence caution" evidence="15">
    <conflict type="erroneous initiation">
        <sequence resource="EMBL-CDS" id="BAF01974"/>
    </conflict>
    <text>Truncated N-terminus.</text>
</comment>
<organism>
    <name type="scientific">Arabidopsis thaliana</name>
    <name type="common">Mouse-ear cress</name>
    <dbReference type="NCBI Taxonomy" id="3702"/>
    <lineage>
        <taxon>Eukaryota</taxon>
        <taxon>Viridiplantae</taxon>
        <taxon>Streptophyta</taxon>
        <taxon>Embryophyta</taxon>
        <taxon>Tracheophyta</taxon>
        <taxon>Spermatophyta</taxon>
        <taxon>Magnoliopsida</taxon>
        <taxon>eudicotyledons</taxon>
        <taxon>Gunneridae</taxon>
        <taxon>Pentapetalae</taxon>
        <taxon>rosids</taxon>
        <taxon>malvids</taxon>
        <taxon>Brassicales</taxon>
        <taxon>Brassicaceae</taxon>
        <taxon>Camelineae</taxon>
        <taxon>Arabidopsis</taxon>
    </lineage>
</organism>
<accession>Q8W4J8</accession>
<accession>A8MSB0</accession>
<accession>F4I6W0</accession>
<accession>Q0WLN3</accession>
<accession>Q2V4D4</accession>
<accession>Q9CAC0</accession>
<name>TIF7_ARATH</name>
<protein>
    <recommendedName>
        <fullName>Protein TIFY 7</fullName>
    </recommendedName>
    <alternativeName>
        <fullName>Jasmonate ZIM domain-containing protein 9</fullName>
    </alternativeName>
</protein>
<gene>
    <name type="primary">TIFY7</name>
    <name type="synonym">JAZ9</name>
    <name type="ordered locus">At1g70700</name>
    <name type="ORF">F5A18.12</name>
</gene>
<sequence>MERDFLGLSDKQYLSNNVKHEVNDDAVEERGLSTKAAREWGKSKVFATSSFMPSSDFQEAKAFPGAYQWGSVSAANVFRRCQFGGAFQNATPLLLGGSVPLPTHPSLVPRVASSGSSPQLTIFYGGTISVFNDISPDKAQAIMLCAGNGLKGETGDSKPVREAERMYGKQIHNTAATSSSSATHTDNFSRCRDTPVAATNAMSMIESFNAAPRNMIPSVPQARKASLARFLEKRKERLMSAMPYKKMLLDLSTGESSGMNYSSTSPT</sequence>
<keyword id="KW-0002">3D-structure</keyword>
<keyword id="KW-0025">Alternative splicing</keyword>
<keyword id="KW-1184">Jasmonic acid signaling pathway</keyword>
<keyword id="KW-0539">Nucleus</keyword>
<keyword id="KW-0611">Plant defense</keyword>
<keyword id="KW-1185">Reference proteome</keyword>
<keyword id="KW-0804">Transcription</keyword>
<keyword id="KW-0805">Transcription regulation</keyword>
<keyword id="KW-0832">Ubl conjugation</keyword>
<dbReference type="EMBL" id="AC011663">
    <property type="protein sequence ID" value="AAG52332.1"/>
    <property type="status" value="ALT_SEQ"/>
    <property type="molecule type" value="Genomic_DNA"/>
</dbReference>
<dbReference type="EMBL" id="CP002684">
    <property type="protein sequence ID" value="AEE35101.1"/>
    <property type="molecule type" value="Genomic_DNA"/>
</dbReference>
<dbReference type="EMBL" id="CP002684">
    <property type="protein sequence ID" value="AEE35102.1"/>
    <property type="molecule type" value="Genomic_DNA"/>
</dbReference>
<dbReference type="EMBL" id="AY062515">
    <property type="protein sequence ID" value="AAL32593.1"/>
    <property type="molecule type" value="mRNA"/>
</dbReference>
<dbReference type="EMBL" id="AY081676">
    <property type="protein sequence ID" value="AAM10238.1"/>
    <property type="molecule type" value="mRNA"/>
</dbReference>
<dbReference type="EMBL" id="AK230165">
    <property type="protein sequence ID" value="BAF01974.1"/>
    <property type="status" value="ALT_INIT"/>
    <property type="molecule type" value="mRNA"/>
</dbReference>
<dbReference type="PIR" id="D96731">
    <property type="entry name" value="D96731"/>
</dbReference>
<dbReference type="RefSeq" id="NP_001031264.4">
    <molecule id="Q8W4J8-2"/>
    <property type="nucleotide sequence ID" value="NM_001036187.5"/>
</dbReference>
<dbReference type="RefSeq" id="NP_177227.5">
    <molecule id="Q8W4J8-1"/>
    <property type="nucleotide sequence ID" value="NM_105738.8"/>
</dbReference>
<dbReference type="PDB" id="4RS9">
    <property type="method" value="X-ray"/>
    <property type="resolution" value="1.95 A"/>
    <property type="chains" value="B=218-239"/>
</dbReference>
<dbReference type="PDB" id="4YWC">
    <property type="method" value="X-ray"/>
    <property type="resolution" value="2.40 A"/>
    <property type="chains" value="C/D=218-239"/>
</dbReference>
<dbReference type="PDBsum" id="4RS9"/>
<dbReference type="PDBsum" id="4YWC"/>
<dbReference type="SMR" id="Q8W4J8"/>
<dbReference type="BioGRID" id="28627">
    <property type="interactions" value="29"/>
</dbReference>
<dbReference type="DIP" id="DIP-52213N"/>
<dbReference type="ELM" id="Q8W4J8"/>
<dbReference type="FunCoup" id="Q8W4J8">
    <property type="interactions" value="299"/>
</dbReference>
<dbReference type="IntAct" id="Q8W4J8">
    <property type="interactions" value="26"/>
</dbReference>
<dbReference type="STRING" id="3702.Q8W4J8"/>
<dbReference type="PaxDb" id="3702-AT1G70700.1"/>
<dbReference type="ProteomicsDB" id="234355">
    <molecule id="Q8W4J8-1"/>
</dbReference>
<dbReference type="EnsemblPlants" id="AT1G70700.1">
    <molecule id="Q8W4J8-1"/>
    <property type="protein sequence ID" value="AT1G70700.1"/>
    <property type="gene ID" value="AT1G70700"/>
</dbReference>
<dbReference type="EnsemblPlants" id="AT1G70700.2">
    <molecule id="Q8W4J8-2"/>
    <property type="protein sequence ID" value="AT1G70700.2"/>
    <property type="gene ID" value="AT1G70700"/>
</dbReference>
<dbReference type="GeneID" id="843407"/>
<dbReference type="Gramene" id="AT1G70700.1">
    <molecule id="Q8W4J8-1"/>
    <property type="protein sequence ID" value="AT1G70700.1"/>
    <property type="gene ID" value="AT1G70700"/>
</dbReference>
<dbReference type="Gramene" id="AT1G70700.2">
    <molecule id="Q8W4J8-2"/>
    <property type="protein sequence ID" value="AT1G70700.2"/>
    <property type="gene ID" value="AT1G70700"/>
</dbReference>
<dbReference type="KEGG" id="ath:AT1G70700"/>
<dbReference type="Araport" id="AT1G70700"/>
<dbReference type="TAIR" id="AT1G70700">
    <property type="gene designation" value="TIFY7"/>
</dbReference>
<dbReference type="eggNOG" id="ENOG502RIU4">
    <property type="taxonomic scope" value="Eukaryota"/>
</dbReference>
<dbReference type="HOGENOM" id="CLU_1257656_0_0_1"/>
<dbReference type="InParanoid" id="Q8W4J8"/>
<dbReference type="OMA" id="RCRDRPV"/>
<dbReference type="EvolutionaryTrace" id="Q8W4J8"/>
<dbReference type="PRO" id="PR:Q8W4J8"/>
<dbReference type="Proteomes" id="UP000006548">
    <property type="component" value="Chromosome 1"/>
</dbReference>
<dbReference type="ExpressionAtlas" id="Q8W4J8">
    <property type="expression patterns" value="baseline and differential"/>
</dbReference>
<dbReference type="GO" id="GO:0005634">
    <property type="term" value="C:nucleus"/>
    <property type="evidence" value="ECO:0007669"/>
    <property type="project" value="UniProtKB-SubCell"/>
</dbReference>
<dbReference type="GO" id="GO:0006952">
    <property type="term" value="P:defense response"/>
    <property type="evidence" value="ECO:0007669"/>
    <property type="project" value="UniProtKB-KW"/>
</dbReference>
<dbReference type="GO" id="GO:0009753">
    <property type="term" value="P:response to jasmonic acid"/>
    <property type="evidence" value="ECO:0000270"/>
    <property type="project" value="TAIR"/>
</dbReference>
<dbReference type="InterPro" id="IPR018467">
    <property type="entry name" value="CCT_CS"/>
</dbReference>
<dbReference type="InterPro" id="IPR040390">
    <property type="entry name" value="TIFY/JAZ"/>
</dbReference>
<dbReference type="InterPro" id="IPR010399">
    <property type="entry name" value="Tify_dom"/>
</dbReference>
<dbReference type="PANTHER" id="PTHR33077">
    <property type="entry name" value="PROTEIN TIFY 4A-RELATED-RELATED"/>
    <property type="match status" value="1"/>
</dbReference>
<dbReference type="PANTHER" id="PTHR33077:SF90">
    <property type="entry name" value="PROTEIN TIFY 7"/>
    <property type="match status" value="1"/>
</dbReference>
<dbReference type="Pfam" id="PF09425">
    <property type="entry name" value="Jas_motif"/>
    <property type="match status" value="1"/>
</dbReference>
<dbReference type="Pfam" id="PF06200">
    <property type="entry name" value="tify"/>
    <property type="match status" value="1"/>
</dbReference>
<dbReference type="SMART" id="SM00979">
    <property type="entry name" value="TIFY"/>
    <property type="match status" value="1"/>
</dbReference>
<dbReference type="PROSITE" id="PS51320">
    <property type="entry name" value="TIFY"/>
    <property type="match status" value="1"/>
</dbReference>
<proteinExistence type="evidence at protein level"/>
<feature type="chain" id="PRO_0000300649" description="Protein TIFY 7">
    <location>
        <begin position="1"/>
        <end position="267"/>
    </location>
</feature>
<feature type="domain" description="Tify" evidence="3">
    <location>
        <begin position="113"/>
        <end position="148"/>
    </location>
</feature>
<feature type="short sequence motif" description="Jas" evidence="2">
    <location>
        <begin position="220"/>
        <end position="244"/>
    </location>
</feature>
<feature type="short sequence motif" description="Nuclear localization signal" evidence="4">
    <location>
        <begin position="222"/>
        <end position="229"/>
    </location>
</feature>
<feature type="splice variant" id="VSP_027851" description="In isoform 2." evidence="15">
    <location>
        <begin position="167"/>
        <end position="190"/>
    </location>
</feature>
<feature type="mutagenesis site" description="Loss of interaction with COI1 and resistant to coronatine-mediated degradation. No effect on MYC2 binding and nuclear localization." evidence="8 13">
    <original>RK</original>
    <variation>AA</variation>
    <location>
        <begin position="223"/>
        <end position="224"/>
    </location>
</feature>
<feature type="mutagenesis site" description="No effect.">
    <original>R</original>
    <variation>A</variation>
    <location>
        <position position="223"/>
    </location>
</feature>
<feature type="mutagenesis site" description="No effect.">
    <original>K</original>
    <variation>A</variation>
    <location>
        <position position="224"/>
    </location>
</feature>
<feature type="mutagenesis site" description="Loss of interaction with MYC2 and COI1 and loss of nuclear localization." evidence="13">
    <original>KRK</original>
    <variation>AAA</variation>
    <location>
        <begin position="233"/>
        <end position="235"/>
    </location>
</feature>
<feature type="mutagenesis site" description="Sensitive to coronatine-mediated degradation and no effect on nuclear localization." evidence="13">
    <original>KRK</original>
    <variation>ARA</variation>
    <location>
        <begin position="233"/>
        <end position="235"/>
    </location>
</feature>
<feature type="mutagenesis site" description="No effect on nuclear localization.">
    <original>K</original>
    <variation>A</variation>
    <location>
        <position position="233"/>
    </location>
</feature>
<feature type="mutagenesis site" description="Loss of interaction with COI1 and resistant to coronatine-mediated degradation. Loss of nuclear localization.">
    <original>R</original>
    <variation>A</variation>
    <location>
        <position position="234"/>
    </location>
</feature>
<feature type="mutagenesis site" description="No effect on interaction with MYC2 and nuclear localization.">
    <original>K</original>
    <variation>A</variation>
    <location>
        <position position="235"/>
    </location>
</feature>
<feature type="sequence conflict" description="In Ref. 3; AAL32593/AAM10238." evidence="15" ref="3">
    <original>D</original>
    <variation>N</variation>
    <location>
        <position position="133"/>
    </location>
</feature>
<feature type="helix" evidence="16">
    <location>
        <begin position="219"/>
        <end position="234"/>
    </location>
</feature>
<evidence type="ECO:0000250" key="1">
    <source>
        <dbReference type="UniProtKB" id="Q7XPM8"/>
    </source>
</evidence>
<evidence type="ECO:0000255" key="2"/>
<evidence type="ECO:0000255" key="3">
    <source>
        <dbReference type="PROSITE-ProRule" id="PRU00650"/>
    </source>
</evidence>
<evidence type="ECO:0000255" key="4">
    <source>
        <dbReference type="PROSITE-ProRule" id="PRU00768"/>
    </source>
</evidence>
<evidence type="ECO:0000269" key="5">
    <source>
    </source>
</evidence>
<evidence type="ECO:0000269" key="6">
    <source>
    </source>
</evidence>
<evidence type="ECO:0000269" key="7">
    <source>
    </source>
</evidence>
<evidence type="ECO:0000269" key="8">
    <source>
    </source>
</evidence>
<evidence type="ECO:0000269" key="9">
    <source>
    </source>
</evidence>
<evidence type="ECO:0000269" key="10">
    <source>
    </source>
</evidence>
<evidence type="ECO:0000269" key="11">
    <source>
    </source>
</evidence>
<evidence type="ECO:0000269" key="12">
    <source>
    </source>
</evidence>
<evidence type="ECO:0000269" key="13">
    <source>
    </source>
</evidence>
<evidence type="ECO:0000269" key="14">
    <source>
    </source>
</evidence>
<evidence type="ECO:0000305" key="15"/>
<evidence type="ECO:0007829" key="16">
    <source>
        <dbReference type="PDB" id="4RS9"/>
    </source>
</evidence>
<reference key="1">
    <citation type="journal article" date="2000" name="Nature">
        <title>Sequence and analysis of chromosome 1 of the plant Arabidopsis thaliana.</title>
        <authorList>
            <person name="Theologis A."/>
            <person name="Ecker J.R."/>
            <person name="Palm C.J."/>
            <person name="Federspiel N.A."/>
            <person name="Kaul S."/>
            <person name="White O."/>
            <person name="Alonso J."/>
            <person name="Altafi H."/>
            <person name="Araujo R."/>
            <person name="Bowman C.L."/>
            <person name="Brooks S.Y."/>
            <person name="Buehler E."/>
            <person name="Chan A."/>
            <person name="Chao Q."/>
            <person name="Chen H."/>
            <person name="Cheuk R.F."/>
            <person name="Chin C.W."/>
            <person name="Chung M.K."/>
            <person name="Conn L."/>
            <person name="Conway A.B."/>
            <person name="Conway A.R."/>
            <person name="Creasy T.H."/>
            <person name="Dewar K."/>
            <person name="Dunn P."/>
            <person name="Etgu P."/>
            <person name="Feldblyum T.V."/>
            <person name="Feng J.-D."/>
            <person name="Fong B."/>
            <person name="Fujii C.Y."/>
            <person name="Gill J.E."/>
            <person name="Goldsmith A.D."/>
            <person name="Haas B."/>
            <person name="Hansen N.F."/>
            <person name="Hughes B."/>
            <person name="Huizar L."/>
            <person name="Hunter J.L."/>
            <person name="Jenkins J."/>
            <person name="Johnson-Hopson C."/>
            <person name="Khan S."/>
            <person name="Khaykin E."/>
            <person name="Kim C.J."/>
            <person name="Koo H.L."/>
            <person name="Kremenetskaia I."/>
            <person name="Kurtz D.B."/>
            <person name="Kwan A."/>
            <person name="Lam B."/>
            <person name="Langin-Hooper S."/>
            <person name="Lee A."/>
            <person name="Lee J.M."/>
            <person name="Lenz C.A."/>
            <person name="Li J.H."/>
            <person name="Li Y.-P."/>
            <person name="Lin X."/>
            <person name="Liu S.X."/>
            <person name="Liu Z.A."/>
            <person name="Luros J.S."/>
            <person name="Maiti R."/>
            <person name="Marziali A."/>
            <person name="Militscher J."/>
            <person name="Miranda M."/>
            <person name="Nguyen M."/>
            <person name="Nierman W.C."/>
            <person name="Osborne B.I."/>
            <person name="Pai G."/>
            <person name="Peterson J."/>
            <person name="Pham P.K."/>
            <person name="Rizzo M."/>
            <person name="Rooney T."/>
            <person name="Rowley D."/>
            <person name="Sakano H."/>
            <person name="Salzberg S.L."/>
            <person name="Schwartz J.R."/>
            <person name="Shinn P."/>
            <person name="Southwick A.M."/>
            <person name="Sun H."/>
            <person name="Tallon L.J."/>
            <person name="Tambunga G."/>
            <person name="Toriumi M.J."/>
            <person name="Town C.D."/>
            <person name="Utterback T."/>
            <person name="Van Aken S."/>
            <person name="Vaysberg M."/>
            <person name="Vysotskaia V.S."/>
            <person name="Walker M."/>
            <person name="Wu D."/>
            <person name="Yu G."/>
            <person name="Fraser C.M."/>
            <person name="Venter J.C."/>
            <person name="Davis R.W."/>
        </authorList>
    </citation>
    <scope>NUCLEOTIDE SEQUENCE [LARGE SCALE GENOMIC DNA]</scope>
    <source>
        <strain>cv. Columbia</strain>
    </source>
</reference>
<reference key="2">
    <citation type="journal article" date="2017" name="Plant J.">
        <title>Araport11: a complete reannotation of the Arabidopsis thaliana reference genome.</title>
        <authorList>
            <person name="Cheng C.Y."/>
            <person name="Krishnakumar V."/>
            <person name="Chan A.P."/>
            <person name="Thibaud-Nissen F."/>
            <person name="Schobel S."/>
            <person name="Town C.D."/>
        </authorList>
    </citation>
    <scope>GENOME REANNOTATION</scope>
    <source>
        <strain>cv. Columbia</strain>
    </source>
</reference>
<reference key="3">
    <citation type="journal article" date="2003" name="Science">
        <title>Empirical analysis of transcriptional activity in the Arabidopsis genome.</title>
        <authorList>
            <person name="Yamada K."/>
            <person name="Lim J."/>
            <person name="Dale J.M."/>
            <person name="Chen H."/>
            <person name="Shinn P."/>
            <person name="Palm C.J."/>
            <person name="Southwick A.M."/>
            <person name="Wu H.C."/>
            <person name="Kim C.J."/>
            <person name="Nguyen M."/>
            <person name="Pham P.K."/>
            <person name="Cheuk R.F."/>
            <person name="Karlin-Newmann G."/>
            <person name="Liu S.X."/>
            <person name="Lam B."/>
            <person name="Sakano H."/>
            <person name="Wu T."/>
            <person name="Yu G."/>
            <person name="Miranda M."/>
            <person name="Quach H.L."/>
            <person name="Tripp M."/>
            <person name="Chang C.H."/>
            <person name="Lee J.M."/>
            <person name="Toriumi M.J."/>
            <person name="Chan M.M."/>
            <person name="Tang C.C."/>
            <person name="Onodera C.S."/>
            <person name="Deng J.M."/>
            <person name="Akiyama K."/>
            <person name="Ansari Y."/>
            <person name="Arakawa T."/>
            <person name="Banh J."/>
            <person name="Banno F."/>
            <person name="Bowser L."/>
            <person name="Brooks S.Y."/>
            <person name="Carninci P."/>
            <person name="Chao Q."/>
            <person name="Choy N."/>
            <person name="Enju A."/>
            <person name="Goldsmith A.D."/>
            <person name="Gurjal M."/>
            <person name="Hansen N.F."/>
            <person name="Hayashizaki Y."/>
            <person name="Johnson-Hopson C."/>
            <person name="Hsuan V.W."/>
            <person name="Iida K."/>
            <person name="Karnes M."/>
            <person name="Khan S."/>
            <person name="Koesema E."/>
            <person name="Ishida J."/>
            <person name="Jiang P.X."/>
            <person name="Jones T."/>
            <person name="Kawai J."/>
            <person name="Kamiya A."/>
            <person name="Meyers C."/>
            <person name="Nakajima M."/>
            <person name="Narusaka M."/>
            <person name="Seki M."/>
            <person name="Sakurai T."/>
            <person name="Satou M."/>
            <person name="Tamse R."/>
            <person name="Vaysberg M."/>
            <person name="Wallender E.K."/>
            <person name="Wong C."/>
            <person name="Yamamura Y."/>
            <person name="Yuan S."/>
            <person name="Shinozaki K."/>
            <person name="Davis R.W."/>
            <person name="Theologis A."/>
            <person name="Ecker J.R."/>
        </authorList>
    </citation>
    <scope>NUCLEOTIDE SEQUENCE [LARGE SCALE MRNA] (ISOFORM 1)</scope>
    <source>
        <strain>cv. Columbia</strain>
    </source>
</reference>
<reference key="4">
    <citation type="submission" date="2006-07" db="EMBL/GenBank/DDBJ databases">
        <title>Large-scale analysis of RIKEN Arabidopsis full-length (RAFL) cDNAs.</title>
        <authorList>
            <person name="Totoki Y."/>
            <person name="Seki M."/>
            <person name="Ishida J."/>
            <person name="Nakajima M."/>
            <person name="Enju A."/>
            <person name="Kamiya A."/>
            <person name="Narusaka M."/>
            <person name="Shin-i T."/>
            <person name="Nakagawa M."/>
            <person name="Sakamoto N."/>
            <person name="Oishi K."/>
            <person name="Kohara Y."/>
            <person name="Kobayashi M."/>
            <person name="Toyoda A."/>
            <person name="Sakaki Y."/>
            <person name="Sakurai T."/>
            <person name="Iida K."/>
            <person name="Akiyama K."/>
            <person name="Satou M."/>
            <person name="Toyoda T."/>
            <person name="Konagaya A."/>
            <person name="Carninci P."/>
            <person name="Kawai J."/>
            <person name="Hayashizaki Y."/>
            <person name="Shinozaki K."/>
        </authorList>
    </citation>
    <scope>NUCLEOTIDE SEQUENCE [LARGE SCALE MRNA] OF 209-267 (ISOFORM 1)</scope>
    <source>
        <strain>cv. Columbia</strain>
    </source>
</reference>
<reference key="5">
    <citation type="journal article" date="2007" name="Nature">
        <title>JAZ repressor proteins are targets of the SCF(COI1) complex during jasmonate signalling.</title>
        <authorList>
            <person name="Thines B."/>
            <person name="Katsir L."/>
            <person name="Melotto M."/>
            <person name="Niu Y."/>
            <person name="Mandaokar A."/>
            <person name="Liu G."/>
            <person name="Nomura K."/>
            <person name="He S.Y."/>
            <person name="Howe G.A."/>
            <person name="Browse J."/>
        </authorList>
    </citation>
    <scope>INDUCTION BY JASMONATE</scope>
</reference>
<reference key="6">
    <citation type="journal article" date="2007" name="Nature">
        <title>The JAZ family of repressors is the missing link in jasmonate signalling.</title>
        <authorList>
            <person name="Chini A."/>
            <person name="Fonseca S."/>
            <person name="Fernandez G."/>
            <person name="Adie B."/>
            <person name="Chico J.M."/>
            <person name="Lorenzo O."/>
            <person name="Garcia-Casado G."/>
            <person name="Lopez-Vidriero I."/>
            <person name="Lozano F.M."/>
            <person name="Ponce M.R."/>
            <person name="Micol J.L."/>
            <person name="Solano R."/>
        </authorList>
    </citation>
    <scope>GENE FAMILY</scope>
    <scope>NOMENCLATURE</scope>
</reference>
<reference key="7">
    <citation type="journal article" date="2007" name="Plant Cell">
        <title>A downstream mediator in the growth repression limb of the jasmonate pathway.</title>
        <authorList>
            <person name="Yan Y."/>
            <person name="Stolz S."/>
            <person name="Chetelat A."/>
            <person name="Reymond P."/>
            <person name="Pagni M."/>
            <person name="Dubugnon L."/>
            <person name="Farmer E.E."/>
        </authorList>
    </citation>
    <scope>DOMAIN</scope>
</reference>
<reference key="8">
    <citation type="journal article" date="2007" name="Trends Plant Sci.">
        <title>The tify family previously known as ZIM.</title>
        <authorList>
            <person name="Vanholme B."/>
            <person name="Grunewald W."/>
            <person name="Bateman A."/>
            <person name="Kohchi T."/>
            <person name="Gheysen G."/>
        </authorList>
    </citation>
    <scope>GENE FAMILY</scope>
    <scope>NOMENCLATURE</scope>
</reference>
<reference key="9">
    <citation type="journal article" date="2008" name="Plant J.">
        <title>A critical role of two positively charged amino acids in the Jas motif of Arabidopsis JAZ proteins in mediating coronatine- and jasmonoyl isoleucine-dependent interactions with the COI1 F-box protein.</title>
        <authorList>
            <person name="Melotto M."/>
            <person name="Mecey C."/>
            <person name="Niu Y."/>
            <person name="Chung H.S."/>
            <person name="Katsir L."/>
            <person name="Yao J."/>
            <person name="Zeng W."/>
            <person name="Thines B."/>
            <person name="Staswick P."/>
            <person name="Browse J."/>
            <person name="Howe G.A."/>
            <person name="He S.Y."/>
        </authorList>
    </citation>
    <scope>INTERACTION WITH COI1 AND MYC2</scope>
    <scope>DOMAIN</scope>
    <scope>MUTAGENESIS OF 223-ARG-LYS-224</scope>
</reference>
<reference key="10">
    <citation type="journal article" date="2008" name="Plant Physiol.">
        <title>Regulation and function of Arabidopsis JASMONATE ZIM-domain genes in response to wounding and herbivory.</title>
        <authorList>
            <person name="Chung H.S."/>
            <person name="Koo A.J."/>
            <person name="Gao X."/>
            <person name="Jayanty S."/>
            <person name="Thines B."/>
            <person name="Jones A.D."/>
            <person name="Howe G.A."/>
        </authorList>
    </citation>
    <scope>INDUCTION BY WOUNDING AND HERBIVORY</scope>
</reference>
<reference key="11">
    <citation type="journal article" date="2009" name="Plant Cell">
        <title>A critical role for the TIFY motif in repression of jasmonate signaling by a stabilized splice variant of the JASMONATE ZIM-domain protein JAZ10 in Arabidopsis.</title>
        <authorList>
            <person name="Chung H.S."/>
            <person name="Howe G.A."/>
        </authorList>
    </citation>
    <scope>FUNCTION</scope>
    <scope>INTERACTION WITH TIFY10A/JAZ1; TIFY10B/JAZ2; TIFY6B/JAZ3; TIFY5A/JAZ8; TIFY9/JAZ10 AND TIFY3A/JAZ11</scope>
</reference>
<reference key="12">
    <citation type="journal article" date="2009" name="Plant J.">
        <title>The ZIM domain mediates homo- and heteromeric interactions between Arabidopsis JAZ proteins.</title>
        <authorList>
            <person name="Chini A."/>
            <person name="Fonseca S."/>
            <person name="Chico J.M."/>
            <person name="Fernandez-Calvo P."/>
            <person name="Solano R."/>
        </authorList>
    </citation>
    <scope>INTERACTION WITH MYC2</scope>
    <scope>SUBUNIT</scope>
</reference>
<reference key="13">
    <citation type="journal article" date="2010" name="Nature">
        <title>NINJA connects the co-repressor TOPLESS to jasmonate signalling.</title>
        <authorList>
            <person name="Pauwels L."/>
            <person name="Barbero G.F."/>
            <person name="Geerinck J."/>
            <person name="Tilleman S."/>
            <person name="Grunewald W."/>
            <person name="Perez A.C."/>
            <person name="Chico J.M."/>
            <person name="Bossche R.V."/>
            <person name="Sewell J."/>
            <person name="Gil E."/>
            <person name="Garcia-Casado G."/>
            <person name="Witters E."/>
            <person name="Inze D."/>
            <person name="Long J.A."/>
            <person name="De Jaeger G."/>
            <person name="Solano R."/>
            <person name="Goossens A."/>
        </authorList>
    </citation>
    <scope>INTERACTION WITH AFPH2/NINJA</scope>
</reference>
<reference key="14">
    <citation type="journal article" date="2011" name="J. Exp. Bot.">
        <title>Characterization of JAZ-interacting bHLH transcription factors that regulate jasmonate responses in Arabidopsis.</title>
        <authorList>
            <person name="Niu Y."/>
            <person name="Figueroa P."/>
            <person name="Browse J."/>
        </authorList>
    </citation>
    <scope>INTERACTION WITH MYC2; MYC3 AND MYC4</scope>
</reference>
<reference key="15">
    <citation type="journal article" date="2012" name="Proc. Natl. Acad. Sci. U.S.A.">
        <title>Transcription factor-dependent nuclear localization of a transcriptional repressor in jasmonate hormone signaling.</title>
        <authorList>
            <person name="Withers J."/>
            <person name="Yao J."/>
            <person name="Mecey C."/>
            <person name="Howe G.A."/>
            <person name="Melotto M."/>
            <person name="He S.Y."/>
        </authorList>
    </citation>
    <scope>INTERACTION WITH MYC2 AND COI1</scope>
    <scope>SUBCELLULAR LOCATION</scope>
    <scope>MUTAGENESIS OF 223-ARG-LYS-224 AND 233-LYS--LYS-235</scope>
</reference>
<reference key="16">
    <citation type="journal article" date="2020" name="Plant Cell">
        <title>Arabidopsis JAZ proteins interact with and suppress RHD6 transcription factor to regulate jasmonate-stimulated root hair development.</title>
        <authorList>
            <person name="Han X."/>
            <person name="Zhang M."/>
            <person name="Yang M."/>
            <person name="Hu Y."/>
        </authorList>
    </citation>
    <scope>FUNCTION</scope>
    <scope>INTERACTION WITH RHD6 AND RSL1</scope>
</reference>
<reference key="17">
    <citation type="journal article" date="2015" name="Nature">
        <title>Structural basis of JAZ repression of MYC transcription factors in jasmonate signalling.</title>
        <authorList>
            <person name="Zhang F."/>
            <person name="Yao J."/>
            <person name="Ke J."/>
            <person name="Zhang L."/>
            <person name="Lam V.Q."/>
            <person name="Xin X.F."/>
            <person name="Zhou X.E."/>
            <person name="Chen J."/>
            <person name="Brunzelle J."/>
            <person name="Griffin P.R."/>
            <person name="Zhou M."/>
            <person name="Xu H.E."/>
            <person name="Melcher K."/>
            <person name="He S.Y."/>
        </authorList>
    </citation>
    <scope>X-RAY CRYSTALLOGRAPHY (1.95 ANGSTROMS) OF 218-239</scope>
</reference>